<reference key="1">
    <citation type="journal article" date="2003" name="Nature">
        <title>Genome sequence of Bacillus cereus and comparative analysis with Bacillus anthracis.</title>
        <authorList>
            <person name="Ivanova N."/>
            <person name="Sorokin A."/>
            <person name="Anderson I."/>
            <person name="Galleron N."/>
            <person name="Candelon B."/>
            <person name="Kapatral V."/>
            <person name="Bhattacharyya A."/>
            <person name="Reznik G."/>
            <person name="Mikhailova N."/>
            <person name="Lapidus A."/>
            <person name="Chu L."/>
            <person name="Mazur M."/>
            <person name="Goltsman E."/>
            <person name="Larsen N."/>
            <person name="D'Souza M."/>
            <person name="Walunas T."/>
            <person name="Grechkin Y."/>
            <person name="Pusch G."/>
            <person name="Haselkorn R."/>
            <person name="Fonstein M."/>
            <person name="Ehrlich S.D."/>
            <person name="Overbeek R."/>
            <person name="Kyrpides N.C."/>
        </authorList>
    </citation>
    <scope>NUCLEOTIDE SEQUENCE [LARGE SCALE GENOMIC DNA]</scope>
    <source>
        <strain>ATCC 14579 / DSM 31 / CCUG 7414 / JCM 2152 / NBRC 15305 / NCIMB 9373 / NCTC 2599 / NRRL B-3711</strain>
    </source>
</reference>
<sequence>MDKRISIAIDGPAAAGKSTVAKVVAKELSYVYIDTGAMYRTLTYAALEQKVDIENEEQLMEVVKNVNIEFQQGENTQLVFLNGQDVSEVIRTPDVTNRVSIVAKHRLVREEMVRRQQELAKKGGVVMDGRDIGTHVLPDAEVKIFMLASVEERAERRHLENLNKGFDSNLEQLKEEIAQRDKLDSEREVSPLKKADDALELDTTSLSIEEVVQKIMSIVSGVFAK</sequence>
<evidence type="ECO:0000255" key="1">
    <source>
        <dbReference type="HAMAP-Rule" id="MF_00238"/>
    </source>
</evidence>
<organism>
    <name type="scientific">Bacillus cereus (strain ATCC 14579 / DSM 31 / CCUG 7414 / JCM 2152 / NBRC 15305 / NCIMB 9373 / NCTC 2599 / NRRL B-3711)</name>
    <dbReference type="NCBI Taxonomy" id="226900"/>
    <lineage>
        <taxon>Bacteria</taxon>
        <taxon>Bacillati</taxon>
        <taxon>Bacillota</taxon>
        <taxon>Bacilli</taxon>
        <taxon>Bacillales</taxon>
        <taxon>Bacillaceae</taxon>
        <taxon>Bacillus</taxon>
        <taxon>Bacillus cereus group</taxon>
    </lineage>
</organism>
<proteinExistence type="inferred from homology"/>
<name>KCY_BACCR</name>
<keyword id="KW-0067">ATP-binding</keyword>
<keyword id="KW-0963">Cytoplasm</keyword>
<keyword id="KW-0418">Kinase</keyword>
<keyword id="KW-0547">Nucleotide-binding</keyword>
<keyword id="KW-1185">Reference proteome</keyword>
<keyword id="KW-0808">Transferase</keyword>
<dbReference type="EC" id="2.7.4.25" evidence="1"/>
<dbReference type="EMBL" id="AE016877">
    <property type="protein sequence ID" value="AAP08477.1"/>
    <property type="molecule type" value="Genomic_DNA"/>
</dbReference>
<dbReference type="RefSeq" id="NP_831276.1">
    <property type="nucleotide sequence ID" value="NC_004722.1"/>
</dbReference>
<dbReference type="RefSeq" id="WP_000361252.1">
    <property type="nucleotide sequence ID" value="NZ_CP138336.1"/>
</dbReference>
<dbReference type="SMR" id="Q81FS2"/>
<dbReference type="STRING" id="226900.BC_1497"/>
<dbReference type="GeneID" id="72448260"/>
<dbReference type="KEGG" id="bce:BC1497"/>
<dbReference type="PATRIC" id="fig|226900.8.peg.1474"/>
<dbReference type="HOGENOM" id="CLU_079959_0_2_9"/>
<dbReference type="OrthoDB" id="9807434at2"/>
<dbReference type="Proteomes" id="UP000001417">
    <property type="component" value="Chromosome"/>
</dbReference>
<dbReference type="GO" id="GO:0005829">
    <property type="term" value="C:cytosol"/>
    <property type="evidence" value="ECO:0000318"/>
    <property type="project" value="GO_Central"/>
</dbReference>
<dbReference type="GO" id="GO:0004127">
    <property type="term" value="F:(d)CMP kinase activity"/>
    <property type="evidence" value="ECO:0000318"/>
    <property type="project" value="GO_Central"/>
</dbReference>
<dbReference type="GO" id="GO:0005524">
    <property type="term" value="F:ATP binding"/>
    <property type="evidence" value="ECO:0007669"/>
    <property type="project" value="UniProtKB-UniRule"/>
</dbReference>
<dbReference type="GO" id="GO:0036430">
    <property type="term" value="F:CMP kinase activity"/>
    <property type="evidence" value="ECO:0007669"/>
    <property type="project" value="RHEA"/>
</dbReference>
<dbReference type="GO" id="GO:0036431">
    <property type="term" value="F:dCMP kinase activity"/>
    <property type="evidence" value="ECO:0007669"/>
    <property type="project" value="RHEA"/>
</dbReference>
<dbReference type="GO" id="GO:0015949">
    <property type="term" value="P:nucleobase-containing small molecule interconversion"/>
    <property type="evidence" value="ECO:0000318"/>
    <property type="project" value="GO_Central"/>
</dbReference>
<dbReference type="GO" id="GO:0006220">
    <property type="term" value="P:pyrimidine nucleotide metabolic process"/>
    <property type="evidence" value="ECO:0007669"/>
    <property type="project" value="UniProtKB-UniRule"/>
</dbReference>
<dbReference type="CDD" id="cd02020">
    <property type="entry name" value="CMPK"/>
    <property type="match status" value="1"/>
</dbReference>
<dbReference type="FunFam" id="3.40.50.300:FF:000484">
    <property type="entry name" value="Cytidylate kinase"/>
    <property type="match status" value="1"/>
</dbReference>
<dbReference type="Gene3D" id="3.40.50.300">
    <property type="entry name" value="P-loop containing nucleotide triphosphate hydrolases"/>
    <property type="match status" value="1"/>
</dbReference>
<dbReference type="HAMAP" id="MF_00238">
    <property type="entry name" value="Cytidyl_kinase_type1"/>
    <property type="match status" value="1"/>
</dbReference>
<dbReference type="InterPro" id="IPR003136">
    <property type="entry name" value="Cytidylate_kin"/>
</dbReference>
<dbReference type="InterPro" id="IPR011994">
    <property type="entry name" value="Cytidylate_kinase_dom"/>
</dbReference>
<dbReference type="InterPro" id="IPR027417">
    <property type="entry name" value="P-loop_NTPase"/>
</dbReference>
<dbReference type="NCBIfam" id="TIGR00017">
    <property type="entry name" value="cmk"/>
    <property type="match status" value="1"/>
</dbReference>
<dbReference type="PANTHER" id="PTHR21299:SF2">
    <property type="entry name" value="CYTIDYLATE KINASE"/>
    <property type="match status" value="1"/>
</dbReference>
<dbReference type="PANTHER" id="PTHR21299">
    <property type="entry name" value="CYTIDYLATE KINASE/PANTOATE-BETA-ALANINE LIGASE"/>
    <property type="match status" value="1"/>
</dbReference>
<dbReference type="Pfam" id="PF02224">
    <property type="entry name" value="Cytidylate_kin"/>
    <property type="match status" value="1"/>
</dbReference>
<dbReference type="SUPFAM" id="SSF52540">
    <property type="entry name" value="P-loop containing nucleoside triphosphate hydrolases"/>
    <property type="match status" value="1"/>
</dbReference>
<feature type="chain" id="PRO_0000131874" description="Cytidylate kinase">
    <location>
        <begin position="1"/>
        <end position="225"/>
    </location>
</feature>
<feature type="binding site" evidence="1">
    <location>
        <begin position="11"/>
        <end position="19"/>
    </location>
    <ligand>
        <name>ATP</name>
        <dbReference type="ChEBI" id="CHEBI:30616"/>
    </ligand>
</feature>
<gene>
    <name evidence="1" type="primary">cmk</name>
    <name type="ordered locus">BC_1497</name>
</gene>
<protein>
    <recommendedName>
        <fullName evidence="1">Cytidylate kinase</fullName>
        <shortName evidence="1">CK</shortName>
        <ecNumber evidence="1">2.7.4.25</ecNumber>
    </recommendedName>
    <alternativeName>
        <fullName evidence="1">Cytidine monophosphate kinase</fullName>
        <shortName evidence="1">CMP kinase</shortName>
    </alternativeName>
</protein>
<comment type="catalytic activity">
    <reaction evidence="1">
        <text>CMP + ATP = CDP + ADP</text>
        <dbReference type="Rhea" id="RHEA:11600"/>
        <dbReference type="ChEBI" id="CHEBI:30616"/>
        <dbReference type="ChEBI" id="CHEBI:58069"/>
        <dbReference type="ChEBI" id="CHEBI:60377"/>
        <dbReference type="ChEBI" id="CHEBI:456216"/>
        <dbReference type="EC" id="2.7.4.25"/>
    </reaction>
</comment>
<comment type="catalytic activity">
    <reaction evidence="1">
        <text>dCMP + ATP = dCDP + ADP</text>
        <dbReference type="Rhea" id="RHEA:25094"/>
        <dbReference type="ChEBI" id="CHEBI:30616"/>
        <dbReference type="ChEBI" id="CHEBI:57566"/>
        <dbReference type="ChEBI" id="CHEBI:58593"/>
        <dbReference type="ChEBI" id="CHEBI:456216"/>
        <dbReference type="EC" id="2.7.4.25"/>
    </reaction>
</comment>
<comment type="subcellular location">
    <subcellularLocation>
        <location evidence="1">Cytoplasm</location>
    </subcellularLocation>
</comment>
<comment type="similarity">
    <text evidence="1">Belongs to the cytidylate kinase family. Type 1 subfamily.</text>
</comment>
<accession>Q81FS2</accession>